<evidence type="ECO:0000255" key="1">
    <source>
        <dbReference type="HAMAP-Rule" id="MF_00830"/>
    </source>
</evidence>
<keyword id="KW-0378">Hydrolase</keyword>
<gene>
    <name evidence="1" type="primary">rutB</name>
    <name type="ordered locus">Psyr_0998</name>
</gene>
<protein>
    <recommendedName>
        <fullName evidence="1">Ureidoacrylate amidohydrolase RutB</fullName>
        <ecNumber evidence="1">3.5.1.110</ecNumber>
    </recommendedName>
</protein>
<sequence length="245" mass="26385">MTTPTTVAGVDLPDLQPARELPARPEPLRMKPGETALVVVDMQNAYASLGGYLDLAGFDVSSTGPVIANINKACAAARAAGIPVIFFQNGWDPAYVEAGGPGSPNWHKSNALKTMRKRPELEGQLLAKGGWDYQLVDELTPQPGDIVVPKIRYSGFFNSSFDSVLRSRGIRNLVFTGIATNVCVESTLRDGFHLEYFGVVLADATHQAGPEFAQQAALFNIETFFGWVSSVDDFCTTFSPVGQPS</sequence>
<comment type="function">
    <text evidence="1">Hydrolyzes ureidoacrylate to form aminoacrylate and carbamate. The carbamate hydrolyzes spontaneously, thereby releasing one of the nitrogen atoms of the pyrimidine ring as ammonia and one of its carbon atoms as CO2.</text>
</comment>
<comment type="catalytic activity">
    <reaction evidence="1">
        <text>(Z)-3-ureidoacrylate + H2O + H(+) = (Z)-3-aminoacrylate + NH4(+) + CO2</text>
        <dbReference type="Rhea" id="RHEA:42624"/>
        <dbReference type="ChEBI" id="CHEBI:15377"/>
        <dbReference type="ChEBI" id="CHEBI:15378"/>
        <dbReference type="ChEBI" id="CHEBI:16526"/>
        <dbReference type="ChEBI" id="CHEBI:28938"/>
        <dbReference type="ChEBI" id="CHEBI:59891"/>
        <dbReference type="ChEBI" id="CHEBI:59894"/>
        <dbReference type="EC" id="3.5.1.110"/>
    </reaction>
</comment>
<comment type="catalytic activity">
    <reaction evidence="1">
        <text>(Z)-3-ureidoacrylate + H2O = (Z)-3-aminoacrylate + carbamate + H(+)</text>
        <dbReference type="Rhea" id="RHEA:31603"/>
        <dbReference type="ChEBI" id="CHEBI:13941"/>
        <dbReference type="ChEBI" id="CHEBI:15377"/>
        <dbReference type="ChEBI" id="CHEBI:15378"/>
        <dbReference type="ChEBI" id="CHEBI:59891"/>
        <dbReference type="ChEBI" id="CHEBI:59894"/>
    </reaction>
</comment>
<comment type="catalytic activity">
    <reaction evidence="1">
        <text>(Z)-2-methylureidoacrylate + H2O + H(+) = (Z)-2-methylaminoacrylate + NH4(+) + CO2</text>
        <dbReference type="Rhea" id="RHEA:42620"/>
        <dbReference type="ChEBI" id="CHEBI:15377"/>
        <dbReference type="ChEBI" id="CHEBI:15378"/>
        <dbReference type="ChEBI" id="CHEBI:16526"/>
        <dbReference type="ChEBI" id="CHEBI:28938"/>
        <dbReference type="ChEBI" id="CHEBI:143783"/>
        <dbReference type="ChEBI" id="CHEBI:145735"/>
        <dbReference type="EC" id="3.5.1.110"/>
    </reaction>
</comment>
<comment type="similarity">
    <text evidence="1">Belongs to the isochorismatase family. RutB subfamily.</text>
</comment>
<feature type="chain" id="PRO_0000402700" description="Ureidoacrylate amidohydrolase RutB">
    <location>
        <begin position="1"/>
        <end position="245"/>
    </location>
</feature>
<feature type="active site" description="Proton acceptor" evidence="1">
    <location>
        <position position="41"/>
    </location>
</feature>
<feature type="active site" evidence="1">
    <location>
        <position position="150"/>
    </location>
</feature>
<feature type="active site" description="Nucleophile" evidence="1">
    <location>
        <position position="183"/>
    </location>
</feature>
<dbReference type="EC" id="3.5.1.110" evidence="1"/>
<dbReference type="EMBL" id="CP000075">
    <property type="protein sequence ID" value="AAY36054.1"/>
    <property type="molecule type" value="Genomic_DNA"/>
</dbReference>
<dbReference type="RefSeq" id="WP_011266760.1">
    <property type="nucleotide sequence ID" value="NC_007005.1"/>
</dbReference>
<dbReference type="RefSeq" id="YP_234092.1">
    <property type="nucleotide sequence ID" value="NC_007005.1"/>
</dbReference>
<dbReference type="SMR" id="Q4ZXR8"/>
<dbReference type="STRING" id="205918.Psyr_0998"/>
<dbReference type="KEGG" id="psb:Psyr_0998"/>
<dbReference type="PATRIC" id="fig|205918.7.peg.1027"/>
<dbReference type="eggNOG" id="COG1335">
    <property type="taxonomic scope" value="Bacteria"/>
</dbReference>
<dbReference type="HOGENOM" id="CLU_068979_8_0_6"/>
<dbReference type="OrthoDB" id="9807387at2"/>
<dbReference type="Proteomes" id="UP000000426">
    <property type="component" value="Chromosome"/>
</dbReference>
<dbReference type="GO" id="GO:0016811">
    <property type="term" value="F:hydrolase activity, acting on carbon-nitrogen (but not peptide) bonds, in linear amides"/>
    <property type="evidence" value="ECO:0007669"/>
    <property type="project" value="UniProtKB-UniRule"/>
</dbReference>
<dbReference type="GO" id="GO:0019740">
    <property type="term" value="P:nitrogen utilization"/>
    <property type="evidence" value="ECO:0007669"/>
    <property type="project" value="UniProtKB-UniRule"/>
</dbReference>
<dbReference type="GO" id="GO:0006212">
    <property type="term" value="P:uracil catabolic process"/>
    <property type="evidence" value="ECO:0007669"/>
    <property type="project" value="UniProtKB-UniRule"/>
</dbReference>
<dbReference type="CDD" id="cd00431">
    <property type="entry name" value="cysteine_hydrolases"/>
    <property type="match status" value="1"/>
</dbReference>
<dbReference type="Gene3D" id="3.40.50.850">
    <property type="entry name" value="Isochorismatase-like"/>
    <property type="match status" value="1"/>
</dbReference>
<dbReference type="HAMAP" id="MF_00830">
    <property type="entry name" value="RutB"/>
    <property type="match status" value="1"/>
</dbReference>
<dbReference type="InterPro" id="IPR000868">
    <property type="entry name" value="Isochorismatase-like_dom"/>
</dbReference>
<dbReference type="InterPro" id="IPR050272">
    <property type="entry name" value="Isochorismatase-like_hydrls"/>
</dbReference>
<dbReference type="InterPro" id="IPR036380">
    <property type="entry name" value="Isochorismatase-like_sf"/>
</dbReference>
<dbReference type="InterPro" id="IPR019916">
    <property type="entry name" value="RutB"/>
</dbReference>
<dbReference type="NCBIfam" id="TIGR03614">
    <property type="entry name" value="RutB"/>
    <property type="match status" value="1"/>
</dbReference>
<dbReference type="PANTHER" id="PTHR43540:SF6">
    <property type="entry name" value="ISOCHORISMATASE-LIKE DOMAIN-CONTAINING PROTEIN"/>
    <property type="match status" value="1"/>
</dbReference>
<dbReference type="PANTHER" id="PTHR43540">
    <property type="entry name" value="PEROXYUREIDOACRYLATE/UREIDOACRYLATE AMIDOHYDROLASE-RELATED"/>
    <property type="match status" value="1"/>
</dbReference>
<dbReference type="Pfam" id="PF00857">
    <property type="entry name" value="Isochorismatase"/>
    <property type="match status" value="1"/>
</dbReference>
<dbReference type="SUPFAM" id="SSF52499">
    <property type="entry name" value="Isochorismatase-like hydrolases"/>
    <property type="match status" value="1"/>
</dbReference>
<organism>
    <name type="scientific">Pseudomonas syringae pv. syringae (strain B728a)</name>
    <dbReference type="NCBI Taxonomy" id="205918"/>
    <lineage>
        <taxon>Bacteria</taxon>
        <taxon>Pseudomonadati</taxon>
        <taxon>Pseudomonadota</taxon>
        <taxon>Gammaproteobacteria</taxon>
        <taxon>Pseudomonadales</taxon>
        <taxon>Pseudomonadaceae</taxon>
        <taxon>Pseudomonas</taxon>
        <taxon>Pseudomonas syringae</taxon>
    </lineage>
</organism>
<proteinExistence type="inferred from homology"/>
<name>RUTB_PSEU2</name>
<reference key="1">
    <citation type="journal article" date="2005" name="Proc. Natl. Acad. Sci. U.S.A.">
        <title>Comparison of the complete genome sequences of Pseudomonas syringae pv. syringae B728a and pv. tomato DC3000.</title>
        <authorList>
            <person name="Feil H."/>
            <person name="Feil W.S."/>
            <person name="Chain P."/>
            <person name="Larimer F."/>
            <person name="Dibartolo G."/>
            <person name="Copeland A."/>
            <person name="Lykidis A."/>
            <person name="Trong S."/>
            <person name="Nolan M."/>
            <person name="Goltsman E."/>
            <person name="Thiel J."/>
            <person name="Malfatti S."/>
            <person name="Loper J.E."/>
            <person name="Lapidus A."/>
            <person name="Detter J.C."/>
            <person name="Land M."/>
            <person name="Richardson P.M."/>
            <person name="Kyrpides N.C."/>
            <person name="Ivanova N."/>
            <person name="Lindow S.E."/>
        </authorList>
    </citation>
    <scope>NUCLEOTIDE SEQUENCE [LARGE SCALE GENOMIC DNA]</scope>
    <source>
        <strain>B728a</strain>
    </source>
</reference>
<accession>Q4ZXR8</accession>